<name>DVL1_PANTR</name>
<keyword id="KW-1003">Cell membrane</keyword>
<keyword id="KW-0963">Cytoplasm</keyword>
<keyword id="KW-0968">Cytoplasmic vesicle</keyword>
<keyword id="KW-0217">Developmental protein</keyword>
<keyword id="KW-0472">Membrane</keyword>
<keyword id="KW-0597">Phosphoprotein</keyword>
<keyword id="KW-1185">Reference proteome</keyword>
<keyword id="KW-0832">Ubl conjugation</keyword>
<keyword id="KW-0879">Wnt signaling pathway</keyword>
<accession>Q5IS48</accession>
<proteinExistence type="evidence at transcript level"/>
<feature type="chain" id="PRO_0000145744" description="Segment polarity protein dishevelled homolog DVL-1">
    <location>
        <begin position="1"/>
        <end position="670"/>
    </location>
</feature>
<feature type="domain" description="DIX" evidence="6">
    <location>
        <begin position="1"/>
        <end position="85"/>
    </location>
</feature>
<feature type="domain" description="PDZ" evidence="7">
    <location>
        <begin position="251"/>
        <end position="323"/>
    </location>
</feature>
<feature type="domain" description="DEP" evidence="5">
    <location>
        <begin position="400"/>
        <end position="474"/>
    </location>
</feature>
<feature type="region of interest" description="Disordered" evidence="8">
    <location>
        <begin position="89"/>
        <end position="237"/>
    </location>
</feature>
<feature type="region of interest" description="Disordered" evidence="8">
    <location>
        <begin position="518"/>
        <end position="642"/>
    </location>
</feature>
<feature type="compositionally biased region" description="Basic residues" evidence="8">
    <location>
        <begin position="142"/>
        <end position="151"/>
    </location>
</feature>
<feature type="compositionally biased region" description="Basic and acidic residues" evidence="8">
    <location>
        <begin position="152"/>
        <end position="171"/>
    </location>
</feature>
<feature type="compositionally biased region" description="Low complexity" evidence="8">
    <location>
        <begin position="176"/>
        <end position="192"/>
    </location>
</feature>
<feature type="compositionally biased region" description="Low complexity" evidence="8">
    <location>
        <begin position="200"/>
        <end position="214"/>
    </location>
</feature>
<feature type="compositionally biased region" description="Basic residues" evidence="8">
    <location>
        <begin position="215"/>
        <end position="228"/>
    </location>
</feature>
<feature type="compositionally biased region" description="Low complexity" evidence="8">
    <location>
        <begin position="526"/>
        <end position="555"/>
    </location>
</feature>
<feature type="compositionally biased region" description="Polar residues" evidence="8">
    <location>
        <begin position="600"/>
        <end position="611"/>
    </location>
</feature>
<feature type="modified residue" description="Phosphoserine" evidence="4">
    <location>
        <position position="194"/>
    </location>
</feature>
<dbReference type="EMBL" id="AY665280">
    <property type="protein sequence ID" value="AAV74318.1"/>
    <property type="molecule type" value="mRNA"/>
</dbReference>
<dbReference type="RefSeq" id="NP_001012432.1">
    <property type="nucleotide sequence ID" value="NM_001012430.1"/>
</dbReference>
<dbReference type="SMR" id="Q5IS48"/>
<dbReference type="FunCoup" id="Q5IS48">
    <property type="interactions" value="1159"/>
</dbReference>
<dbReference type="STRING" id="9598.ENSPTRP00000073737"/>
<dbReference type="PaxDb" id="9598-ENSPTRP00000055553"/>
<dbReference type="GeneID" id="457191"/>
<dbReference type="KEGG" id="ptr:457191"/>
<dbReference type="CTD" id="1855"/>
<dbReference type="eggNOG" id="KOG3571">
    <property type="taxonomic scope" value="Eukaryota"/>
</dbReference>
<dbReference type="InParanoid" id="Q5IS48"/>
<dbReference type="Proteomes" id="UP000002277">
    <property type="component" value="Unplaced"/>
</dbReference>
<dbReference type="GO" id="GO:0031410">
    <property type="term" value="C:cytoplasmic vesicle"/>
    <property type="evidence" value="ECO:0007669"/>
    <property type="project" value="UniProtKB-KW"/>
</dbReference>
<dbReference type="GO" id="GO:0005829">
    <property type="term" value="C:cytosol"/>
    <property type="evidence" value="ECO:0000318"/>
    <property type="project" value="GO_Central"/>
</dbReference>
<dbReference type="GO" id="GO:0005886">
    <property type="term" value="C:plasma membrane"/>
    <property type="evidence" value="ECO:0000250"/>
    <property type="project" value="UniProtKB"/>
</dbReference>
<dbReference type="GO" id="GO:0005109">
    <property type="term" value="F:frizzled binding"/>
    <property type="evidence" value="ECO:0000318"/>
    <property type="project" value="GO_Central"/>
</dbReference>
<dbReference type="GO" id="GO:0060070">
    <property type="term" value="P:canonical Wnt signaling pathway"/>
    <property type="evidence" value="ECO:0000318"/>
    <property type="project" value="GO_Central"/>
</dbReference>
<dbReference type="GO" id="GO:0035556">
    <property type="term" value="P:intracellular signal transduction"/>
    <property type="evidence" value="ECO:0007669"/>
    <property type="project" value="InterPro"/>
</dbReference>
<dbReference type="CDD" id="cd04438">
    <property type="entry name" value="DEP_dishevelled"/>
    <property type="match status" value="1"/>
</dbReference>
<dbReference type="CDD" id="cd06717">
    <property type="entry name" value="PDZ_Dishevelled-like"/>
    <property type="match status" value="1"/>
</dbReference>
<dbReference type="FunFam" id="2.40.240.130:FF:000001">
    <property type="entry name" value="Segment polarity protein dishevelled homolog DVL-1"/>
    <property type="match status" value="1"/>
</dbReference>
<dbReference type="FunFam" id="2.30.42.10:FF:000014">
    <property type="entry name" value="Segment polarity protein dishevelled homolog DVL-3"/>
    <property type="match status" value="1"/>
</dbReference>
<dbReference type="FunFam" id="1.10.10.10:FF:000040">
    <property type="entry name" value="segment polarity protein dishevelled homolog DVL-3"/>
    <property type="match status" value="1"/>
</dbReference>
<dbReference type="Gene3D" id="2.30.42.10">
    <property type="match status" value="1"/>
</dbReference>
<dbReference type="Gene3D" id="2.40.240.130">
    <property type="match status" value="1"/>
</dbReference>
<dbReference type="Gene3D" id="1.10.10.10">
    <property type="entry name" value="Winged helix-like DNA-binding domain superfamily/Winged helix DNA-binding domain"/>
    <property type="match status" value="1"/>
</dbReference>
<dbReference type="InterPro" id="IPR000591">
    <property type="entry name" value="DEP_dom"/>
</dbReference>
<dbReference type="InterPro" id="IPR024580">
    <property type="entry name" value="Dishevelled_C-dom"/>
</dbReference>
<dbReference type="InterPro" id="IPR008339">
    <property type="entry name" value="Dishevelled_fam"/>
</dbReference>
<dbReference type="InterPro" id="IPR003351">
    <property type="entry name" value="Dishevelled_protein_dom"/>
</dbReference>
<dbReference type="InterPro" id="IPR001158">
    <property type="entry name" value="DIX"/>
</dbReference>
<dbReference type="InterPro" id="IPR038207">
    <property type="entry name" value="DIX_dom_sf"/>
</dbReference>
<dbReference type="InterPro" id="IPR015506">
    <property type="entry name" value="Dsh/Dvl-rel"/>
</dbReference>
<dbReference type="InterPro" id="IPR001478">
    <property type="entry name" value="PDZ"/>
</dbReference>
<dbReference type="InterPro" id="IPR036034">
    <property type="entry name" value="PDZ_sf"/>
</dbReference>
<dbReference type="InterPro" id="IPR029071">
    <property type="entry name" value="Ubiquitin-like_domsf"/>
</dbReference>
<dbReference type="InterPro" id="IPR036388">
    <property type="entry name" value="WH-like_DNA-bd_sf"/>
</dbReference>
<dbReference type="InterPro" id="IPR036390">
    <property type="entry name" value="WH_DNA-bd_sf"/>
</dbReference>
<dbReference type="PANTHER" id="PTHR10878">
    <property type="entry name" value="SEGMENT POLARITY PROTEIN DISHEVELLED"/>
    <property type="match status" value="1"/>
</dbReference>
<dbReference type="PANTHER" id="PTHR10878:SF5">
    <property type="entry name" value="SEGMENT POLARITY PROTEIN DISHEVELLED HOMOLOG DVL-1-RELATED"/>
    <property type="match status" value="1"/>
</dbReference>
<dbReference type="Pfam" id="PF00610">
    <property type="entry name" value="DEP"/>
    <property type="match status" value="1"/>
</dbReference>
<dbReference type="Pfam" id="PF02377">
    <property type="entry name" value="Dishevelled"/>
    <property type="match status" value="1"/>
</dbReference>
<dbReference type="Pfam" id="PF00778">
    <property type="entry name" value="DIX"/>
    <property type="match status" value="1"/>
</dbReference>
<dbReference type="Pfam" id="PF12316">
    <property type="entry name" value="Dsh_C"/>
    <property type="match status" value="1"/>
</dbReference>
<dbReference type="Pfam" id="PF00595">
    <property type="entry name" value="PDZ"/>
    <property type="match status" value="1"/>
</dbReference>
<dbReference type="PRINTS" id="PR01760">
    <property type="entry name" value="DISHEVELLED"/>
</dbReference>
<dbReference type="PRINTS" id="PR01761">
    <property type="entry name" value="DISHEVELLED1"/>
</dbReference>
<dbReference type="SMART" id="SM00021">
    <property type="entry name" value="DAX"/>
    <property type="match status" value="1"/>
</dbReference>
<dbReference type="SMART" id="SM00049">
    <property type="entry name" value="DEP"/>
    <property type="match status" value="1"/>
</dbReference>
<dbReference type="SMART" id="SM00228">
    <property type="entry name" value="PDZ"/>
    <property type="match status" value="1"/>
</dbReference>
<dbReference type="SUPFAM" id="SSF50156">
    <property type="entry name" value="PDZ domain-like"/>
    <property type="match status" value="1"/>
</dbReference>
<dbReference type="SUPFAM" id="SSF54236">
    <property type="entry name" value="Ubiquitin-like"/>
    <property type="match status" value="1"/>
</dbReference>
<dbReference type="SUPFAM" id="SSF46785">
    <property type="entry name" value="Winged helix' DNA-binding domain"/>
    <property type="match status" value="1"/>
</dbReference>
<dbReference type="PROSITE" id="PS50186">
    <property type="entry name" value="DEP"/>
    <property type="match status" value="1"/>
</dbReference>
<dbReference type="PROSITE" id="PS50841">
    <property type="entry name" value="DIX"/>
    <property type="match status" value="1"/>
</dbReference>
<dbReference type="PROSITE" id="PS50106">
    <property type="entry name" value="PDZ"/>
    <property type="match status" value="1"/>
</dbReference>
<organism>
    <name type="scientific">Pan troglodytes</name>
    <name type="common">Chimpanzee</name>
    <dbReference type="NCBI Taxonomy" id="9598"/>
    <lineage>
        <taxon>Eukaryota</taxon>
        <taxon>Metazoa</taxon>
        <taxon>Chordata</taxon>
        <taxon>Craniata</taxon>
        <taxon>Vertebrata</taxon>
        <taxon>Euteleostomi</taxon>
        <taxon>Mammalia</taxon>
        <taxon>Eutheria</taxon>
        <taxon>Euarchontoglires</taxon>
        <taxon>Primates</taxon>
        <taxon>Haplorrhini</taxon>
        <taxon>Catarrhini</taxon>
        <taxon>Hominidae</taxon>
        <taxon>Pan</taxon>
    </lineage>
</organism>
<reference key="1">
    <citation type="journal article" date="2004" name="Cell">
        <title>Accelerated evolution of nervous system genes in the origin of Homo sapiens.</title>
        <authorList>
            <person name="Dorus S."/>
            <person name="Vallender E.J."/>
            <person name="Evans P.D."/>
            <person name="Anderson J.R."/>
            <person name="Gilbert S.L."/>
            <person name="Mahowald M."/>
            <person name="Wyckoff G.J."/>
            <person name="Malcom C.M."/>
            <person name="Lahn B.T."/>
        </authorList>
    </citation>
    <scope>NUCLEOTIDE SEQUENCE [MRNA]</scope>
</reference>
<comment type="function">
    <text evidence="1">Participates in Wnt signaling by binding to the cytoplasmic C-terminus of frizzled family members and transducing the Wnt signal to down-stream effectors. Plays a role both in canonical and non-canonical Wnt signaling. Plays a role in the signal transduction pathways mediated by multiple Wnt genes. Required for LEF1 activation upon WNT1 and WNT3A signaling. DVL1 and PAK1 form a ternary complex with MUSK which is important for MUSK-dependent regulation of AChR clustering during the formation of the neuromuscular junction (NMJ) (By similarity).</text>
</comment>
<comment type="subunit">
    <text evidence="2 3 4">Interacts with CXXC4. Interacts (via PDZ domain) with NXN (By similarity). Interacts with BRD7 and INVS. Interacts (via PDZ domain) with VANGL1 and VANGL2 (via C-terminus). Interacts with ARRB1; the interaction is enhanced by phosphorylation of DVL1. Interacts with CYLD (By similarity). Interacts (via PDZ domain) with RYK. Self-associates (via DIX domain) and forms higher homooligomers. Interacts (via PDZ domain) with DACT1 and FZD7, where DACT1 and FZD7 compete for the same binding site (By similarity). Interacts (via DEP domain) with MUSK; the interaction is direct and mediates the formation a DVL1, MUSK and PAK1 ternary complex involved in AChR clustering (By similarity). Interacts (via PDZ domain) with TMEM88. Interacts with DCDC2. Interacts with FOXK2 (By similarity). Interacts with PKD1 (via extracellular domain) (By similarity). Interacts (via PDZ domain) with CCDC88C/DAPLE; competes with CCDC88C for binding to frizzled receptor FZD7 and dissociates from CCDC88C following initiation of non-canonical Wnt signaling when CCDC88C displaces DVL1 from ligand-activated FZD7 (By similarity).</text>
</comment>
<comment type="subcellular location">
    <subcellularLocation>
        <location evidence="1">Cell membrane</location>
        <topology evidence="1">Peripheral membrane protein</topology>
        <orientation evidence="1">Cytoplasmic side</orientation>
    </subcellularLocation>
    <subcellularLocation>
        <location evidence="1">Cytoplasm</location>
        <location evidence="1">Cytosol</location>
    </subcellularLocation>
    <subcellularLocation>
        <location evidence="1">Cytoplasmic vesicle</location>
    </subcellularLocation>
    <text evidence="1">Localizes at the cell membrane upon interaction with frizzled family members.</text>
</comment>
<comment type="domain">
    <text evidence="1">The DIX domain promotes homooligomerization.</text>
</comment>
<comment type="domain">
    <text evidence="1">The DEP domain mediates interaction with the cell membrane.</text>
</comment>
<comment type="PTM">
    <text evidence="1">Ubiquitinated; undergoes both 'Lys-48'-linked ubiquitination, leading to its subsequent degradation by the ubiquitin-proteasome pathway, and 'Lys-63'-linked ubiquitination. The interaction with INVS is required for ubiquitination. Deubiquitinated by CYLD, which acts on 'Lys-63'-linked ubiquitin chains (By similarity).</text>
</comment>
<comment type="similarity">
    <text evidence="9">Belongs to the DSH family.</text>
</comment>
<sequence length="670" mass="72851">MAETKIIYHMDEEETPYLVKLPVAPERVTLADFKNVLSNRPVHAYKFFFKSMDQDFGVVKEEIFDDNAKLPCFNGRVVSWLVLAEGAHSDAGSQGTDSHTDLPPPLERTGGIGDSRPPSFHPNVASSRDGMDNETGTESMVSHRRERARRRNREEAARTNGHPRGDRRRDVGLPPDSASTALSSELESSSFVDSDEDGSTSRLSSSTEQSTSSRLIRKHKRRRRKQRLRQADRASSFSSITDSTMSLNIVTVTLNMERHHFLGISIVGQSNDRGDGGIYIGSIMKGGAVAADGRIEPGDMLLQVNDVNFENMSNDDAVRVLREIVSQTGPISLTVAKCWDPTPRSYFTVPRADPVRPIDPAAWLSHTAALTGALPRYELEEAPLTVKSDMSAVVRVMQLPDSGLEIRDRMWLKITIANAVIGADVVDWLYTHVEGFKERREARKYASSLLKHGFLRHTVNKITFSEQCYYVFGDLCSNLATLNLNSGSSGASDQDTLAPLPHPAAPWPLGQGYPYQYPGPPPCFPPAYQDPGFSYGSGSTGSQQSEGSKSSGSTRSSRRAPGREKERRAAGAGGSGSESDHTAPSGVGSSWRERPAGQLSRGSSPRSQASATAPGLPPPHPTTKAYTVVGGPPGGPPVRELAAVPPELTGSRQSFQKAMGNPCEFFVDIM</sequence>
<gene>
    <name type="primary">DVL1</name>
</gene>
<evidence type="ECO:0000250" key="1"/>
<evidence type="ECO:0000250" key="2">
    <source>
        <dbReference type="UniProtKB" id="O14640"/>
    </source>
</evidence>
<evidence type="ECO:0000250" key="3">
    <source>
        <dbReference type="UniProtKB" id="P51141"/>
    </source>
</evidence>
<evidence type="ECO:0000250" key="4">
    <source>
        <dbReference type="UniProtKB" id="Q9WVB9"/>
    </source>
</evidence>
<evidence type="ECO:0000255" key="5">
    <source>
        <dbReference type="PROSITE-ProRule" id="PRU00066"/>
    </source>
</evidence>
<evidence type="ECO:0000255" key="6">
    <source>
        <dbReference type="PROSITE-ProRule" id="PRU00069"/>
    </source>
</evidence>
<evidence type="ECO:0000255" key="7">
    <source>
        <dbReference type="PROSITE-ProRule" id="PRU00143"/>
    </source>
</evidence>
<evidence type="ECO:0000256" key="8">
    <source>
        <dbReference type="SAM" id="MobiDB-lite"/>
    </source>
</evidence>
<evidence type="ECO:0000305" key="9"/>
<protein>
    <recommendedName>
        <fullName>Segment polarity protein dishevelled homolog DVL-1</fullName>
        <shortName>Dishevelled-1</shortName>
    </recommendedName>
    <alternativeName>
        <fullName>DSH homolog 1</fullName>
    </alternativeName>
</protein>